<feature type="chain" id="PRO_0000347003" description="Putative uncharacterized protein DDB_G0287975">
    <location>
        <begin position="1"/>
        <end position="166"/>
    </location>
</feature>
<feature type="region of interest" description="Disordered" evidence="1">
    <location>
        <begin position="73"/>
        <end position="101"/>
    </location>
</feature>
<feature type="region of interest" description="Disordered" evidence="1">
    <location>
        <begin position="126"/>
        <end position="166"/>
    </location>
</feature>
<feature type="compositionally biased region" description="Low complexity" evidence="1">
    <location>
        <begin position="73"/>
        <end position="88"/>
    </location>
</feature>
<feature type="compositionally biased region" description="Basic and acidic residues" evidence="1">
    <location>
        <begin position="89"/>
        <end position="101"/>
    </location>
</feature>
<feature type="compositionally biased region" description="Low complexity" evidence="1">
    <location>
        <begin position="134"/>
        <end position="154"/>
    </location>
</feature>
<feature type="compositionally biased region" description="Polar residues" evidence="1">
    <location>
        <begin position="155"/>
        <end position="166"/>
    </location>
</feature>
<gene>
    <name type="ORF">DDB_G0287975</name>
</gene>
<accession>Q54JL4</accession>
<dbReference type="EMBL" id="AAFI02000107">
    <property type="protein sequence ID" value="EAL63413.1"/>
    <property type="molecule type" value="Genomic_DNA"/>
</dbReference>
<dbReference type="RefSeq" id="XP_636917.1">
    <property type="nucleotide sequence ID" value="XM_631825.1"/>
</dbReference>
<dbReference type="STRING" id="44689.Q54JL4"/>
<dbReference type="GlyGen" id="Q54JL4">
    <property type="glycosylation" value="1 site"/>
</dbReference>
<dbReference type="PaxDb" id="44689-DDB0187715"/>
<dbReference type="EnsemblProtists" id="EAL63413">
    <property type="protein sequence ID" value="EAL63413"/>
    <property type="gene ID" value="DDB_G0287975"/>
</dbReference>
<dbReference type="GeneID" id="8626392"/>
<dbReference type="KEGG" id="ddi:DDB_G0287975"/>
<dbReference type="dictyBase" id="DDB_G0287975"/>
<dbReference type="VEuPathDB" id="AmoebaDB:DDB_G0287975"/>
<dbReference type="eggNOG" id="ENOG502RSU5">
    <property type="taxonomic scope" value="Eukaryota"/>
</dbReference>
<dbReference type="HOGENOM" id="CLU_1605759_0_0_1"/>
<dbReference type="InParanoid" id="Q54JL4"/>
<dbReference type="OMA" id="MQIFIKE"/>
<dbReference type="PRO" id="PR:Q54JL4"/>
<dbReference type="Proteomes" id="UP000002195">
    <property type="component" value="Chromosome 5"/>
</dbReference>
<dbReference type="GO" id="GO:0031390">
    <property type="term" value="C:Ctf18 RFC-like complex"/>
    <property type="evidence" value="ECO:0007669"/>
    <property type="project" value="InterPro"/>
</dbReference>
<dbReference type="GO" id="GO:0007064">
    <property type="term" value="P:mitotic sister chromatid cohesion"/>
    <property type="evidence" value="ECO:0007669"/>
    <property type="project" value="InterPro"/>
</dbReference>
<dbReference type="InterPro" id="IPR018607">
    <property type="entry name" value="Ctf8"/>
</dbReference>
<dbReference type="PANTHER" id="PTHR47475">
    <property type="entry name" value="CHROMOSOME TRANSMISSION FIDELITY PROTEIN 8"/>
    <property type="match status" value="1"/>
</dbReference>
<dbReference type="PANTHER" id="PTHR47475:SF2">
    <property type="entry name" value="CHROMOSOME TRANSMISSION FIDELITY PROTEIN 8"/>
    <property type="match status" value="1"/>
</dbReference>
<dbReference type="Pfam" id="PF09696">
    <property type="entry name" value="Ctf8"/>
    <property type="match status" value="1"/>
</dbReference>
<sequence length="166" mass="18668">MQIFIKESTNKKEWFILDLQGHLEYTGDLKNETLGILTKKPNTKDDFSFQIGNSVLVGKRVPLKKPLLVIKKSKLNNNNNSNNNNKMAVDNKDNKDNEKDKEVEYSIEGICNDKIQFTTRPTTFIPQSSVVYGSPTHKSPSSSPKTISPVKVSPTSSPIKNPEFNN</sequence>
<reference key="1">
    <citation type="journal article" date="2005" name="Nature">
        <title>The genome of the social amoeba Dictyostelium discoideum.</title>
        <authorList>
            <person name="Eichinger L."/>
            <person name="Pachebat J.A."/>
            <person name="Gloeckner G."/>
            <person name="Rajandream M.A."/>
            <person name="Sucgang R."/>
            <person name="Berriman M."/>
            <person name="Song J."/>
            <person name="Olsen R."/>
            <person name="Szafranski K."/>
            <person name="Xu Q."/>
            <person name="Tunggal B."/>
            <person name="Kummerfeld S."/>
            <person name="Madera M."/>
            <person name="Konfortov B.A."/>
            <person name="Rivero F."/>
            <person name="Bankier A.T."/>
            <person name="Lehmann R."/>
            <person name="Hamlin N."/>
            <person name="Davies R."/>
            <person name="Gaudet P."/>
            <person name="Fey P."/>
            <person name="Pilcher K."/>
            <person name="Chen G."/>
            <person name="Saunders D."/>
            <person name="Sodergren E.J."/>
            <person name="Davis P."/>
            <person name="Kerhornou A."/>
            <person name="Nie X."/>
            <person name="Hall N."/>
            <person name="Anjard C."/>
            <person name="Hemphill L."/>
            <person name="Bason N."/>
            <person name="Farbrother P."/>
            <person name="Desany B."/>
            <person name="Just E."/>
            <person name="Morio T."/>
            <person name="Rost R."/>
            <person name="Churcher C.M."/>
            <person name="Cooper J."/>
            <person name="Haydock S."/>
            <person name="van Driessche N."/>
            <person name="Cronin A."/>
            <person name="Goodhead I."/>
            <person name="Muzny D.M."/>
            <person name="Mourier T."/>
            <person name="Pain A."/>
            <person name="Lu M."/>
            <person name="Harper D."/>
            <person name="Lindsay R."/>
            <person name="Hauser H."/>
            <person name="James K.D."/>
            <person name="Quiles M."/>
            <person name="Madan Babu M."/>
            <person name="Saito T."/>
            <person name="Buchrieser C."/>
            <person name="Wardroper A."/>
            <person name="Felder M."/>
            <person name="Thangavelu M."/>
            <person name="Johnson D."/>
            <person name="Knights A."/>
            <person name="Loulseged H."/>
            <person name="Mungall K.L."/>
            <person name="Oliver K."/>
            <person name="Price C."/>
            <person name="Quail M.A."/>
            <person name="Urushihara H."/>
            <person name="Hernandez J."/>
            <person name="Rabbinowitsch E."/>
            <person name="Steffen D."/>
            <person name="Sanders M."/>
            <person name="Ma J."/>
            <person name="Kohara Y."/>
            <person name="Sharp S."/>
            <person name="Simmonds M.N."/>
            <person name="Spiegler S."/>
            <person name="Tivey A."/>
            <person name="Sugano S."/>
            <person name="White B."/>
            <person name="Walker D."/>
            <person name="Woodward J.R."/>
            <person name="Winckler T."/>
            <person name="Tanaka Y."/>
            <person name="Shaulsky G."/>
            <person name="Schleicher M."/>
            <person name="Weinstock G.M."/>
            <person name="Rosenthal A."/>
            <person name="Cox E.C."/>
            <person name="Chisholm R.L."/>
            <person name="Gibbs R.A."/>
            <person name="Loomis W.F."/>
            <person name="Platzer M."/>
            <person name="Kay R.R."/>
            <person name="Williams J.G."/>
            <person name="Dear P.H."/>
            <person name="Noegel A.A."/>
            <person name="Barrell B.G."/>
            <person name="Kuspa A."/>
        </authorList>
    </citation>
    <scope>NUCLEOTIDE SEQUENCE [LARGE SCALE GENOMIC DNA]</scope>
    <source>
        <strain>AX4</strain>
    </source>
</reference>
<protein>
    <recommendedName>
        <fullName>Putative uncharacterized protein DDB_G0287975</fullName>
    </recommendedName>
</protein>
<proteinExistence type="predicted"/>
<name>Y7715_DICDI</name>
<organism>
    <name type="scientific">Dictyostelium discoideum</name>
    <name type="common">Social amoeba</name>
    <dbReference type="NCBI Taxonomy" id="44689"/>
    <lineage>
        <taxon>Eukaryota</taxon>
        <taxon>Amoebozoa</taxon>
        <taxon>Evosea</taxon>
        <taxon>Eumycetozoa</taxon>
        <taxon>Dictyostelia</taxon>
        <taxon>Dictyosteliales</taxon>
        <taxon>Dictyosteliaceae</taxon>
        <taxon>Dictyostelium</taxon>
    </lineage>
</organism>
<keyword id="KW-1185">Reference proteome</keyword>
<evidence type="ECO:0000256" key="1">
    <source>
        <dbReference type="SAM" id="MobiDB-lite"/>
    </source>
</evidence>